<dbReference type="EC" id="3.5.3.23" evidence="1"/>
<dbReference type="EMBL" id="CP001120">
    <property type="protein sequence ID" value="ACF66835.1"/>
    <property type="molecule type" value="Genomic_DNA"/>
</dbReference>
<dbReference type="RefSeq" id="WP_000123951.1">
    <property type="nucleotide sequence ID" value="NC_011083.1"/>
</dbReference>
<dbReference type="SMR" id="B4TGE3"/>
<dbReference type="KEGG" id="seh:SeHA_C1433"/>
<dbReference type="HOGENOM" id="CLU_053835_0_0_6"/>
<dbReference type="UniPathway" id="UPA00185">
    <property type="reaction ID" value="UER00280"/>
</dbReference>
<dbReference type="Proteomes" id="UP000001866">
    <property type="component" value="Chromosome"/>
</dbReference>
<dbReference type="GO" id="GO:0009015">
    <property type="term" value="F:N-succinylarginine dihydrolase activity"/>
    <property type="evidence" value="ECO:0007669"/>
    <property type="project" value="UniProtKB-UniRule"/>
</dbReference>
<dbReference type="GO" id="GO:0019544">
    <property type="term" value="P:arginine catabolic process to glutamate"/>
    <property type="evidence" value="ECO:0007669"/>
    <property type="project" value="UniProtKB-UniRule"/>
</dbReference>
<dbReference type="GO" id="GO:0019545">
    <property type="term" value="P:arginine catabolic process to succinate"/>
    <property type="evidence" value="ECO:0007669"/>
    <property type="project" value="UniProtKB-UniRule"/>
</dbReference>
<dbReference type="FunFam" id="3.75.10.20:FF:000001">
    <property type="entry name" value="N-succinylarginine dihydrolase"/>
    <property type="match status" value="1"/>
</dbReference>
<dbReference type="Gene3D" id="3.75.10.20">
    <property type="entry name" value="Succinylarginine dihydrolase"/>
    <property type="match status" value="1"/>
</dbReference>
<dbReference type="HAMAP" id="MF_01172">
    <property type="entry name" value="AstB"/>
    <property type="match status" value="1"/>
</dbReference>
<dbReference type="InterPro" id="IPR037031">
    <property type="entry name" value="AstB_sf"/>
</dbReference>
<dbReference type="InterPro" id="IPR007079">
    <property type="entry name" value="SuccinylArg_d-Hdrlase_AstB"/>
</dbReference>
<dbReference type="NCBIfam" id="TIGR03241">
    <property type="entry name" value="arg_catab_astB"/>
    <property type="match status" value="1"/>
</dbReference>
<dbReference type="NCBIfam" id="NF009789">
    <property type="entry name" value="PRK13281.1"/>
    <property type="match status" value="1"/>
</dbReference>
<dbReference type="PANTHER" id="PTHR30420">
    <property type="entry name" value="N-SUCCINYLARGININE DIHYDROLASE"/>
    <property type="match status" value="1"/>
</dbReference>
<dbReference type="PANTHER" id="PTHR30420:SF2">
    <property type="entry name" value="N-SUCCINYLARGININE DIHYDROLASE"/>
    <property type="match status" value="1"/>
</dbReference>
<dbReference type="Pfam" id="PF04996">
    <property type="entry name" value="AstB"/>
    <property type="match status" value="1"/>
</dbReference>
<dbReference type="SUPFAM" id="SSF55909">
    <property type="entry name" value="Pentein"/>
    <property type="match status" value="1"/>
</dbReference>
<sequence>MTAHEVNFDGLVGLTHHYAGLSFGNEASTRHRFQVSNPRLAVKQGLLKMKALADAGFPQAVIPPHERPFIPALRQLGFTGSDEQILDKVARQAPRWLSSVSSASPMWVANAATVCPSADALDGKVHLTVANLNNKFHRALEAPVTEALLRAIFRDESQFSVHSALPQVALLGDEGAANHNRLGGEYGSAGVQLFVYGREEENEIRPARYPARQSREASEAVARLNQVNPQQVIFAQQNPEVIDQGVFHNDVIAVSNRQVLFCHEAAFARQKVLINQLRTRVDGFMAIEVPAGEVSVSDAVATYLFNSQLLSRNDGSMLLVLPRECQDHAGVWRYLNKLVAEDNPISAMQVFDLRESMANGGGPACLRLRVVLTEEERRAVNPAVMMNDALFTALNAWADRYYRDRLTAADLADPLLLREGREALDVLTRLLDLGSVYPFQQTGAADG</sequence>
<organism>
    <name type="scientific">Salmonella heidelberg (strain SL476)</name>
    <dbReference type="NCBI Taxonomy" id="454169"/>
    <lineage>
        <taxon>Bacteria</taxon>
        <taxon>Pseudomonadati</taxon>
        <taxon>Pseudomonadota</taxon>
        <taxon>Gammaproteobacteria</taxon>
        <taxon>Enterobacterales</taxon>
        <taxon>Enterobacteriaceae</taxon>
        <taxon>Salmonella</taxon>
    </lineage>
</organism>
<name>ASTB_SALHS</name>
<protein>
    <recommendedName>
        <fullName evidence="1">N-succinylarginine dihydrolase</fullName>
        <ecNumber evidence="1">3.5.3.23</ecNumber>
    </recommendedName>
</protein>
<proteinExistence type="inferred from homology"/>
<keyword id="KW-0056">Arginine metabolism</keyword>
<keyword id="KW-0378">Hydrolase</keyword>
<evidence type="ECO:0000255" key="1">
    <source>
        <dbReference type="HAMAP-Rule" id="MF_01172"/>
    </source>
</evidence>
<comment type="function">
    <text evidence="1">Catalyzes the hydrolysis of N(2)-succinylarginine into N(2)-succinylornithine, ammonia and CO(2).</text>
</comment>
<comment type="catalytic activity">
    <reaction evidence="1">
        <text>N(2)-succinyl-L-arginine + 2 H2O + 2 H(+) = N(2)-succinyl-L-ornithine + 2 NH4(+) + CO2</text>
        <dbReference type="Rhea" id="RHEA:19533"/>
        <dbReference type="ChEBI" id="CHEBI:15377"/>
        <dbReference type="ChEBI" id="CHEBI:15378"/>
        <dbReference type="ChEBI" id="CHEBI:16526"/>
        <dbReference type="ChEBI" id="CHEBI:28938"/>
        <dbReference type="ChEBI" id="CHEBI:58241"/>
        <dbReference type="ChEBI" id="CHEBI:58514"/>
        <dbReference type="EC" id="3.5.3.23"/>
    </reaction>
</comment>
<comment type="pathway">
    <text evidence="1">Amino-acid degradation; L-arginine degradation via AST pathway; L-glutamate and succinate from L-arginine: step 2/5.</text>
</comment>
<comment type="subunit">
    <text evidence="1">Homodimer.</text>
</comment>
<comment type="similarity">
    <text evidence="1">Belongs to the succinylarginine dihydrolase family.</text>
</comment>
<accession>B4TGE3</accession>
<gene>
    <name evidence="1" type="primary">astB</name>
    <name type="ordered locus">SeHA_C1433</name>
</gene>
<reference key="1">
    <citation type="journal article" date="2011" name="J. Bacteriol.">
        <title>Comparative genomics of 28 Salmonella enterica isolates: evidence for CRISPR-mediated adaptive sublineage evolution.</title>
        <authorList>
            <person name="Fricke W.F."/>
            <person name="Mammel M.K."/>
            <person name="McDermott P.F."/>
            <person name="Tartera C."/>
            <person name="White D.G."/>
            <person name="Leclerc J.E."/>
            <person name="Ravel J."/>
            <person name="Cebula T.A."/>
        </authorList>
    </citation>
    <scope>NUCLEOTIDE SEQUENCE [LARGE SCALE GENOMIC DNA]</scope>
    <source>
        <strain>SL476</strain>
    </source>
</reference>
<feature type="chain" id="PRO_1000138025" description="N-succinylarginine dihydrolase">
    <location>
        <begin position="1"/>
        <end position="447"/>
    </location>
</feature>
<feature type="active site" evidence="1">
    <location>
        <position position="174"/>
    </location>
</feature>
<feature type="active site" evidence="1">
    <location>
        <position position="248"/>
    </location>
</feature>
<feature type="active site" description="Nucleophile" evidence="1">
    <location>
        <position position="365"/>
    </location>
</feature>
<feature type="binding site" evidence="1">
    <location>
        <begin position="19"/>
        <end position="28"/>
    </location>
    <ligand>
        <name>substrate</name>
    </ligand>
</feature>
<feature type="binding site" evidence="1">
    <location>
        <position position="110"/>
    </location>
    <ligand>
        <name>substrate</name>
    </ligand>
</feature>
<feature type="binding site" evidence="1">
    <location>
        <begin position="137"/>
        <end position="138"/>
    </location>
    <ligand>
        <name>substrate</name>
    </ligand>
</feature>
<feature type="binding site" evidence="1">
    <location>
        <position position="212"/>
    </location>
    <ligand>
        <name>substrate</name>
    </ligand>
</feature>
<feature type="binding site" evidence="1">
    <location>
        <position position="250"/>
    </location>
    <ligand>
        <name>substrate</name>
    </ligand>
</feature>
<feature type="binding site" evidence="1">
    <location>
        <position position="359"/>
    </location>
    <ligand>
        <name>substrate</name>
    </ligand>
</feature>